<comment type="function">
    <text evidence="4 7">Cytochrome P450 monooxygenase; part of the cluster that mediates the biosynthesis of acurin A, a highly reduced polyketide coupled to a serine via a peptide bond (PubMed:32234543). The activities of the highly reducing polyketide synthase acrA and the nonribosomal peptide synthetase acrB are collectively responsible for the synthesis of the acurin A core structure with a heptaketide backbone produced by acrA covalently fused to a L-serine by acrB (PubMed:32234543). After the formation of the PK-NRP hybrid product, it is detached from acrB by reductive release to set up the formation of the lactam ring by aldol condensation (Probable). The hydrolyase acrC then catalyzes water loss to generate a double bond in the ring (Probable). This double bond is probably reduced, which is followed by three oxidations at C-22 to generate the carboxylic acid moiety, involving probably the FAD-binding monooxygenase acrE and the cytochrome P450 monooxygenases acrD and acrF (Probable). Finally, a last methylation step performed by the O-methyltransferase acrG leads to the production of acurin A (Probable).</text>
</comment>
<comment type="cofactor">
    <cofactor evidence="1">
        <name>heme</name>
        <dbReference type="ChEBI" id="CHEBI:30413"/>
    </cofactor>
</comment>
<comment type="pathway">
    <text evidence="4">Secondary metabolite biosynthesis.</text>
</comment>
<comment type="subcellular location">
    <subcellularLocation>
        <location evidence="2">Membrane</location>
        <topology evidence="2">Single-pass membrane protein</topology>
    </subcellularLocation>
</comment>
<comment type="induction">
    <text evidence="4">Expression is positively regulated by the acurin A cluster-specific transcription regulator acrR.</text>
</comment>
<comment type="disruption phenotype">
    <text evidence="4">Abolishes the production of acurin A.</text>
</comment>
<comment type="similarity">
    <text evidence="6">Belongs to the cytochrome P450 family.</text>
</comment>
<gene>
    <name evidence="5" type="primary">acrD</name>
    <name type="ORF">ASPACDRAFT_45003</name>
</gene>
<name>ACRD_ASPA1</name>
<proteinExistence type="evidence at transcript level"/>
<organism>
    <name type="scientific">Aspergillus aculeatus (strain ATCC 16872 / CBS 172.66 / WB 5094)</name>
    <dbReference type="NCBI Taxonomy" id="690307"/>
    <lineage>
        <taxon>Eukaryota</taxon>
        <taxon>Fungi</taxon>
        <taxon>Dikarya</taxon>
        <taxon>Ascomycota</taxon>
        <taxon>Pezizomycotina</taxon>
        <taxon>Eurotiomycetes</taxon>
        <taxon>Eurotiomycetidae</taxon>
        <taxon>Eurotiales</taxon>
        <taxon>Aspergillaceae</taxon>
        <taxon>Aspergillus</taxon>
        <taxon>Aspergillus subgen. Circumdati</taxon>
    </lineage>
</organism>
<reference key="1">
    <citation type="journal article" date="2017" name="Genome Biol.">
        <title>Comparative genomics reveals high biological diversity and specific adaptations in the industrially and medically important fungal genus Aspergillus.</title>
        <authorList>
            <person name="de Vries R.P."/>
            <person name="Riley R."/>
            <person name="Wiebenga A."/>
            <person name="Aguilar-Osorio G."/>
            <person name="Amillis S."/>
            <person name="Uchima C.A."/>
            <person name="Anderluh G."/>
            <person name="Asadollahi M."/>
            <person name="Askin M."/>
            <person name="Barry K."/>
            <person name="Battaglia E."/>
            <person name="Bayram O."/>
            <person name="Benocci T."/>
            <person name="Braus-Stromeyer S.A."/>
            <person name="Caldana C."/>
            <person name="Canovas D."/>
            <person name="Cerqueira G.C."/>
            <person name="Chen F."/>
            <person name="Chen W."/>
            <person name="Choi C."/>
            <person name="Clum A."/>
            <person name="Dos Santos R.A."/>
            <person name="Damasio A.R."/>
            <person name="Diallinas G."/>
            <person name="Emri T."/>
            <person name="Fekete E."/>
            <person name="Flipphi M."/>
            <person name="Freyberg S."/>
            <person name="Gallo A."/>
            <person name="Gournas C."/>
            <person name="Habgood R."/>
            <person name="Hainaut M."/>
            <person name="Harispe M.L."/>
            <person name="Henrissat B."/>
            <person name="Hilden K.S."/>
            <person name="Hope R."/>
            <person name="Hossain A."/>
            <person name="Karabika E."/>
            <person name="Karaffa L."/>
            <person name="Karanyi Z."/>
            <person name="Krasevec N."/>
            <person name="Kuo A."/>
            <person name="Kusch H."/>
            <person name="LaButti K."/>
            <person name="Lagendijk E.L."/>
            <person name="Lapidus A."/>
            <person name="Levasseur A."/>
            <person name="Lindquist E."/>
            <person name="Lipzen A."/>
            <person name="Logrieco A.F."/>
            <person name="MacCabe A."/>
            <person name="Maekelae M.R."/>
            <person name="Malavazi I."/>
            <person name="Melin P."/>
            <person name="Meyer V."/>
            <person name="Mielnichuk N."/>
            <person name="Miskei M."/>
            <person name="Molnar A.P."/>
            <person name="Mule G."/>
            <person name="Ngan C.Y."/>
            <person name="Orejas M."/>
            <person name="Orosz E."/>
            <person name="Ouedraogo J.P."/>
            <person name="Overkamp K.M."/>
            <person name="Park H.-S."/>
            <person name="Perrone G."/>
            <person name="Piumi F."/>
            <person name="Punt P.J."/>
            <person name="Ram A.F."/>
            <person name="Ramon A."/>
            <person name="Rauscher S."/>
            <person name="Record E."/>
            <person name="Riano-Pachon D.M."/>
            <person name="Robert V."/>
            <person name="Roehrig J."/>
            <person name="Ruller R."/>
            <person name="Salamov A."/>
            <person name="Salih N.S."/>
            <person name="Samson R.A."/>
            <person name="Sandor E."/>
            <person name="Sanguinetti M."/>
            <person name="Schuetze T."/>
            <person name="Sepcic K."/>
            <person name="Shelest E."/>
            <person name="Sherlock G."/>
            <person name="Sophianopoulou V."/>
            <person name="Squina F.M."/>
            <person name="Sun H."/>
            <person name="Susca A."/>
            <person name="Todd R.B."/>
            <person name="Tsang A."/>
            <person name="Unkles S.E."/>
            <person name="van de Wiele N."/>
            <person name="van Rossen-Uffink D."/>
            <person name="Oliveira J.V."/>
            <person name="Vesth T.C."/>
            <person name="Visser J."/>
            <person name="Yu J.-H."/>
            <person name="Zhou M."/>
            <person name="Andersen M.R."/>
            <person name="Archer D.B."/>
            <person name="Baker S.E."/>
            <person name="Benoit I."/>
            <person name="Brakhage A.A."/>
            <person name="Braus G.H."/>
            <person name="Fischer R."/>
            <person name="Frisvad J.C."/>
            <person name="Goldman G.H."/>
            <person name="Houbraken J."/>
            <person name="Oakley B."/>
            <person name="Pocsi I."/>
            <person name="Scazzocchio C."/>
            <person name="Seiboth B."/>
            <person name="vanKuyk P.A."/>
            <person name="Wortman J."/>
            <person name="Dyer P.S."/>
            <person name="Grigoriev I.V."/>
        </authorList>
    </citation>
    <scope>NUCLEOTIDE SEQUENCE [LARGE SCALE GENOMIC DNA]</scope>
    <source>
        <strain>ATCC 16872 / CBS 172.66 / WB 5094</strain>
    </source>
</reference>
<reference key="2">
    <citation type="journal article" date="2020" name="Fungal Genet. Biol.">
        <title>Acurin A, a novel hybrid compound, biosynthesized by individually translated PKS- and NRPS-encoding genes in Aspergillus aculeatus.</title>
        <authorList>
            <person name="Wolff P.B."/>
            <person name="Nielsen M.L."/>
            <person name="Slot J.C."/>
            <person name="Andersen L.N."/>
            <person name="Petersen L.M."/>
            <person name="Isbrandt T."/>
            <person name="Holm D.K."/>
            <person name="Mortensen U.H."/>
            <person name="Noedvig C.S."/>
            <person name="Larsen T.O."/>
            <person name="Hoof J.B."/>
        </authorList>
    </citation>
    <scope>FUNCTION</scope>
    <scope>DISRUPTION PHENOTYPE</scope>
    <scope>PATHWAY</scope>
    <scope>INDUCTION</scope>
</reference>
<feature type="chain" id="PRO_0000450417" description="Cytochrome P450 monooxygenase acrD">
    <location>
        <begin position="1"/>
        <end position="500"/>
    </location>
</feature>
<feature type="transmembrane region" description="Helical" evidence="2">
    <location>
        <begin position="13"/>
        <end position="32"/>
    </location>
</feature>
<feature type="binding site" description="axial binding residue" evidence="1">
    <location>
        <position position="447"/>
    </location>
    <ligand>
        <name>heme</name>
        <dbReference type="ChEBI" id="CHEBI:30413"/>
    </ligand>
    <ligandPart>
        <name>Fe</name>
        <dbReference type="ChEBI" id="CHEBI:18248"/>
    </ligandPart>
</feature>
<feature type="glycosylation site" description="N-linked (GlcNAc...) asparagine" evidence="3">
    <location>
        <position position="210"/>
    </location>
</feature>
<feature type="glycosylation site" description="N-linked (GlcNAc...) asparagine" evidence="3">
    <location>
        <position position="414"/>
    </location>
</feature>
<evidence type="ECO:0000250" key="1">
    <source>
        <dbReference type="UniProtKB" id="P04798"/>
    </source>
</evidence>
<evidence type="ECO:0000255" key="2"/>
<evidence type="ECO:0000255" key="3">
    <source>
        <dbReference type="PROSITE-ProRule" id="PRU00498"/>
    </source>
</evidence>
<evidence type="ECO:0000269" key="4">
    <source>
    </source>
</evidence>
<evidence type="ECO:0000303" key="5">
    <source>
    </source>
</evidence>
<evidence type="ECO:0000305" key="6"/>
<evidence type="ECO:0000305" key="7">
    <source>
    </source>
</evidence>
<accession>A0A1L9WQP6</accession>
<dbReference type="EC" id="1.-.-.-" evidence="4"/>
<dbReference type="EMBL" id="KV878980">
    <property type="protein sequence ID" value="OJJ98490.1"/>
    <property type="molecule type" value="Genomic_DNA"/>
</dbReference>
<dbReference type="RefSeq" id="XP_020054830.1">
    <property type="nucleotide sequence ID" value="XM_020201528.1"/>
</dbReference>
<dbReference type="SMR" id="A0A1L9WQP6"/>
<dbReference type="STRING" id="690307.A0A1L9WQP6"/>
<dbReference type="GlyCosmos" id="A0A1L9WQP6">
    <property type="glycosylation" value="2 sites, No reported glycans"/>
</dbReference>
<dbReference type="GeneID" id="30975342"/>
<dbReference type="VEuPathDB" id="FungiDB:ASPACDRAFT_45003"/>
<dbReference type="OMA" id="FALQEMH"/>
<dbReference type="OrthoDB" id="655030at2759"/>
<dbReference type="Proteomes" id="UP000184546">
    <property type="component" value="Unassembled WGS sequence"/>
</dbReference>
<dbReference type="GO" id="GO:0016020">
    <property type="term" value="C:membrane"/>
    <property type="evidence" value="ECO:0007669"/>
    <property type="project" value="UniProtKB-SubCell"/>
</dbReference>
<dbReference type="GO" id="GO:0020037">
    <property type="term" value="F:heme binding"/>
    <property type="evidence" value="ECO:0007669"/>
    <property type="project" value="InterPro"/>
</dbReference>
<dbReference type="GO" id="GO:0005506">
    <property type="term" value="F:iron ion binding"/>
    <property type="evidence" value="ECO:0007669"/>
    <property type="project" value="InterPro"/>
</dbReference>
<dbReference type="GO" id="GO:0004497">
    <property type="term" value="F:monooxygenase activity"/>
    <property type="evidence" value="ECO:0007669"/>
    <property type="project" value="UniProtKB-KW"/>
</dbReference>
<dbReference type="GO" id="GO:0016705">
    <property type="term" value="F:oxidoreductase activity, acting on paired donors, with incorporation or reduction of molecular oxygen"/>
    <property type="evidence" value="ECO:0007669"/>
    <property type="project" value="InterPro"/>
</dbReference>
<dbReference type="Gene3D" id="1.10.630.10">
    <property type="entry name" value="Cytochrome P450"/>
    <property type="match status" value="1"/>
</dbReference>
<dbReference type="InterPro" id="IPR001128">
    <property type="entry name" value="Cyt_P450"/>
</dbReference>
<dbReference type="InterPro" id="IPR017972">
    <property type="entry name" value="Cyt_P450_CS"/>
</dbReference>
<dbReference type="InterPro" id="IPR002401">
    <property type="entry name" value="Cyt_P450_E_grp-I"/>
</dbReference>
<dbReference type="InterPro" id="IPR036396">
    <property type="entry name" value="Cyt_P450_sf"/>
</dbReference>
<dbReference type="InterPro" id="IPR050121">
    <property type="entry name" value="Cytochrome_P450_monoxygenase"/>
</dbReference>
<dbReference type="PANTHER" id="PTHR24305">
    <property type="entry name" value="CYTOCHROME P450"/>
    <property type="match status" value="1"/>
</dbReference>
<dbReference type="PANTHER" id="PTHR24305:SF166">
    <property type="entry name" value="CYTOCHROME P450 12A4, MITOCHONDRIAL-RELATED"/>
    <property type="match status" value="1"/>
</dbReference>
<dbReference type="Pfam" id="PF00067">
    <property type="entry name" value="p450"/>
    <property type="match status" value="1"/>
</dbReference>
<dbReference type="PRINTS" id="PR00463">
    <property type="entry name" value="EP450I"/>
</dbReference>
<dbReference type="PRINTS" id="PR00385">
    <property type="entry name" value="P450"/>
</dbReference>
<dbReference type="SUPFAM" id="SSF48264">
    <property type="entry name" value="Cytochrome P450"/>
    <property type="match status" value="1"/>
</dbReference>
<dbReference type="PROSITE" id="PS00086">
    <property type="entry name" value="CYTOCHROME_P450"/>
    <property type="match status" value="1"/>
</dbReference>
<keyword id="KW-0325">Glycoprotein</keyword>
<keyword id="KW-0349">Heme</keyword>
<keyword id="KW-0408">Iron</keyword>
<keyword id="KW-0472">Membrane</keyword>
<keyword id="KW-0479">Metal-binding</keyword>
<keyword id="KW-0503">Monooxygenase</keyword>
<keyword id="KW-0560">Oxidoreductase</keyword>
<keyword id="KW-1185">Reference proteome</keyword>
<keyword id="KW-0812">Transmembrane</keyword>
<keyword id="KW-1133">Transmembrane helix</keyword>
<protein>
    <recommendedName>
        <fullName evidence="5">Cytochrome P450 monooxygenase acrD</fullName>
        <ecNumber evidence="4">1.-.-.-</ecNumber>
    </recommendedName>
    <alternativeName>
        <fullName evidence="5">Acurin A biosynthesis cluster protein D</fullName>
    </alternativeName>
</protein>
<sequence>MAEIHDITGLLKPYLSGTNLVWTLLLVGYIIPKLFQYLQRLFSPVSRIPGSWLHKLTSLPLKIAIAKGESHIFTVDLHKKYGPIVTLSPTMISISDAREIKRIVHTEDWAKSEAVYGNFRQDPQRPTLLAFTDKKAYSQRKRLVSSMFGLRYIRSMQPLMRNCISVLMDELDKQCANGATAVDMQHMIQSLAADIIGVTTFGQTFDLVKNGSHPLPDRLKQALKLSGILQFMPWLTKIPFIPNRDPYVSWFTNEIVAKRRAQIASRQGPPREDLLQKMIEAADESPTSPFRVSDIQDESVVLLIAGSETTANAELFTLIHLLRHPSKLATLYEEIDRWYPRNDPRPTDCDYSMSGMVYLQACIDETMRLVPGQATGSPRESRKDETLLGYDIPKGTTVFPTTQEVHLDETLWPNATEFLPERWLDVYAKGEANSLPYYPFSAGSRVCIGKHFAAQEMHLSLVSLLRRFQFEYVSGQDESTVFRIAQQMRGHRYLMTVGRR</sequence>